<gene>
    <name evidence="1" type="primary">tmk</name>
    <name type="ordered locus">RC1047</name>
</gene>
<protein>
    <recommendedName>
        <fullName evidence="1">Thymidylate kinase</fullName>
        <ecNumber evidence="1">2.7.4.9</ecNumber>
    </recommendedName>
    <alternativeName>
        <fullName evidence="1">dTMP kinase</fullName>
    </alternativeName>
</protein>
<sequence>MNNLKQGKFITFEGGEGIGKSTQSQMLYEYLQSQNTPVILTREVGGTIVAEKMREILVHEELLPMSELLQAMAARYDHMARKIIPALQEGHIVICDRFIESTVCYQGLELENGIDLVYNLHKTLMPSLMPDITFFIDVEPDTAIKRVNSRNMNNKFDIRGIDFYKKIYYCFKELSNRFPERIKTIKASDLSPLEVHELIKKHL</sequence>
<feature type="chain" id="PRO_0000155330" description="Thymidylate kinase">
    <location>
        <begin position="1"/>
        <end position="203"/>
    </location>
</feature>
<feature type="binding site" evidence="1">
    <location>
        <begin position="14"/>
        <end position="21"/>
    </location>
    <ligand>
        <name>ATP</name>
        <dbReference type="ChEBI" id="CHEBI:30616"/>
    </ligand>
</feature>
<dbReference type="EC" id="2.7.4.9" evidence="1"/>
<dbReference type="EMBL" id="AE006914">
    <property type="protein sequence ID" value="AAL03585.1"/>
    <property type="molecule type" value="Genomic_DNA"/>
</dbReference>
<dbReference type="PIR" id="G97830">
    <property type="entry name" value="G97830"/>
</dbReference>
<dbReference type="RefSeq" id="WP_010977625.1">
    <property type="nucleotide sequence ID" value="NC_003103.1"/>
</dbReference>
<dbReference type="SMR" id="Q92GS5"/>
<dbReference type="GeneID" id="928196"/>
<dbReference type="KEGG" id="rco:RC1047"/>
<dbReference type="PATRIC" id="fig|272944.4.peg.1198"/>
<dbReference type="HOGENOM" id="CLU_049131_0_2_5"/>
<dbReference type="Proteomes" id="UP000000816">
    <property type="component" value="Chromosome"/>
</dbReference>
<dbReference type="GO" id="GO:0005829">
    <property type="term" value="C:cytosol"/>
    <property type="evidence" value="ECO:0007669"/>
    <property type="project" value="TreeGrafter"/>
</dbReference>
<dbReference type="GO" id="GO:0005524">
    <property type="term" value="F:ATP binding"/>
    <property type="evidence" value="ECO:0007669"/>
    <property type="project" value="UniProtKB-UniRule"/>
</dbReference>
<dbReference type="GO" id="GO:0004798">
    <property type="term" value="F:dTMP kinase activity"/>
    <property type="evidence" value="ECO:0007669"/>
    <property type="project" value="UniProtKB-UniRule"/>
</dbReference>
<dbReference type="GO" id="GO:0006233">
    <property type="term" value="P:dTDP biosynthetic process"/>
    <property type="evidence" value="ECO:0007669"/>
    <property type="project" value="InterPro"/>
</dbReference>
<dbReference type="GO" id="GO:0006235">
    <property type="term" value="P:dTTP biosynthetic process"/>
    <property type="evidence" value="ECO:0007669"/>
    <property type="project" value="UniProtKB-UniRule"/>
</dbReference>
<dbReference type="GO" id="GO:0006227">
    <property type="term" value="P:dUDP biosynthetic process"/>
    <property type="evidence" value="ECO:0007669"/>
    <property type="project" value="TreeGrafter"/>
</dbReference>
<dbReference type="CDD" id="cd01672">
    <property type="entry name" value="TMPK"/>
    <property type="match status" value="1"/>
</dbReference>
<dbReference type="FunFam" id="3.40.50.300:FF:000225">
    <property type="entry name" value="Thymidylate kinase"/>
    <property type="match status" value="1"/>
</dbReference>
<dbReference type="Gene3D" id="3.40.50.300">
    <property type="entry name" value="P-loop containing nucleotide triphosphate hydrolases"/>
    <property type="match status" value="1"/>
</dbReference>
<dbReference type="HAMAP" id="MF_00165">
    <property type="entry name" value="Thymidylate_kinase"/>
    <property type="match status" value="1"/>
</dbReference>
<dbReference type="InterPro" id="IPR027417">
    <property type="entry name" value="P-loop_NTPase"/>
</dbReference>
<dbReference type="InterPro" id="IPR039430">
    <property type="entry name" value="Thymidylate_kin-like_dom"/>
</dbReference>
<dbReference type="InterPro" id="IPR018095">
    <property type="entry name" value="Thymidylate_kin_CS"/>
</dbReference>
<dbReference type="InterPro" id="IPR018094">
    <property type="entry name" value="Thymidylate_kinase"/>
</dbReference>
<dbReference type="NCBIfam" id="TIGR00041">
    <property type="entry name" value="DTMP_kinase"/>
    <property type="match status" value="1"/>
</dbReference>
<dbReference type="PANTHER" id="PTHR10344">
    <property type="entry name" value="THYMIDYLATE KINASE"/>
    <property type="match status" value="1"/>
</dbReference>
<dbReference type="PANTHER" id="PTHR10344:SF4">
    <property type="entry name" value="UMP-CMP KINASE 2, MITOCHONDRIAL"/>
    <property type="match status" value="1"/>
</dbReference>
<dbReference type="Pfam" id="PF02223">
    <property type="entry name" value="Thymidylate_kin"/>
    <property type="match status" value="1"/>
</dbReference>
<dbReference type="SUPFAM" id="SSF52540">
    <property type="entry name" value="P-loop containing nucleoside triphosphate hydrolases"/>
    <property type="match status" value="1"/>
</dbReference>
<dbReference type="PROSITE" id="PS01331">
    <property type="entry name" value="THYMIDYLATE_KINASE"/>
    <property type="match status" value="1"/>
</dbReference>
<reference key="1">
    <citation type="journal article" date="2001" name="Science">
        <title>Mechanisms of evolution in Rickettsia conorii and R. prowazekii.</title>
        <authorList>
            <person name="Ogata H."/>
            <person name="Audic S."/>
            <person name="Renesto-Audiffren P."/>
            <person name="Fournier P.-E."/>
            <person name="Barbe V."/>
            <person name="Samson D."/>
            <person name="Roux V."/>
            <person name="Cossart P."/>
            <person name="Weissenbach J."/>
            <person name="Claverie J.-M."/>
            <person name="Raoult D."/>
        </authorList>
    </citation>
    <scope>NUCLEOTIDE SEQUENCE [LARGE SCALE GENOMIC DNA]</scope>
    <source>
        <strain>ATCC VR-613 / Malish 7</strain>
    </source>
</reference>
<proteinExistence type="inferred from homology"/>
<accession>Q92GS5</accession>
<evidence type="ECO:0000255" key="1">
    <source>
        <dbReference type="HAMAP-Rule" id="MF_00165"/>
    </source>
</evidence>
<comment type="function">
    <text evidence="1">Phosphorylation of dTMP to form dTDP in both de novo and salvage pathways of dTTP synthesis.</text>
</comment>
<comment type="catalytic activity">
    <reaction evidence="1">
        <text>dTMP + ATP = dTDP + ADP</text>
        <dbReference type="Rhea" id="RHEA:13517"/>
        <dbReference type="ChEBI" id="CHEBI:30616"/>
        <dbReference type="ChEBI" id="CHEBI:58369"/>
        <dbReference type="ChEBI" id="CHEBI:63528"/>
        <dbReference type="ChEBI" id="CHEBI:456216"/>
        <dbReference type="EC" id="2.7.4.9"/>
    </reaction>
</comment>
<comment type="similarity">
    <text evidence="1">Belongs to the thymidylate kinase family.</text>
</comment>
<organism>
    <name type="scientific">Rickettsia conorii (strain ATCC VR-613 / Malish 7)</name>
    <dbReference type="NCBI Taxonomy" id="272944"/>
    <lineage>
        <taxon>Bacteria</taxon>
        <taxon>Pseudomonadati</taxon>
        <taxon>Pseudomonadota</taxon>
        <taxon>Alphaproteobacteria</taxon>
        <taxon>Rickettsiales</taxon>
        <taxon>Rickettsiaceae</taxon>
        <taxon>Rickettsieae</taxon>
        <taxon>Rickettsia</taxon>
        <taxon>spotted fever group</taxon>
    </lineage>
</organism>
<keyword id="KW-0067">ATP-binding</keyword>
<keyword id="KW-0418">Kinase</keyword>
<keyword id="KW-0545">Nucleotide biosynthesis</keyword>
<keyword id="KW-0547">Nucleotide-binding</keyword>
<keyword id="KW-0808">Transferase</keyword>
<name>KTHY_RICCN</name>